<protein>
    <recommendedName>
        <fullName>Gene 72 protein</fullName>
    </recommendedName>
    <alternativeName>
        <fullName>Gp72</fullName>
    </alternativeName>
</protein>
<name>VG72_BPML5</name>
<feature type="chain" id="PRO_0000164815" description="Gene 72 protein">
    <location>
        <begin position="1"/>
        <end position="58"/>
    </location>
</feature>
<reference key="1">
    <citation type="journal article" date="1993" name="Mol. Microbiol.">
        <title>DNA sequence, structure and gene expression of mycobacteriophage L5: a phage system for mycobacterial genetics.</title>
        <authorList>
            <person name="Hatfull G.F."/>
            <person name="Sarkis G.J."/>
        </authorList>
    </citation>
    <scope>NUCLEOTIDE SEQUENCE [LARGE SCALE GENOMIC DNA]</scope>
</reference>
<accession>Q05287</accession>
<organism>
    <name type="scientific">Mycobacterium phage L5</name>
    <name type="common">Mycobacteriophage L5</name>
    <dbReference type="NCBI Taxonomy" id="31757"/>
    <lineage>
        <taxon>Viruses</taxon>
        <taxon>Duplodnaviria</taxon>
        <taxon>Heunggongvirae</taxon>
        <taxon>Uroviricota</taxon>
        <taxon>Caudoviricetes</taxon>
        <taxon>Fromanvirus</taxon>
    </lineage>
</organism>
<dbReference type="EMBL" id="Z18946">
    <property type="protein sequence ID" value="CAA79448.1"/>
    <property type="molecule type" value="Genomic_DNA"/>
</dbReference>
<dbReference type="PIR" id="S34575">
    <property type="entry name" value="S34575"/>
</dbReference>
<dbReference type="RefSeq" id="NP_039736.1">
    <property type="nucleotide sequence ID" value="NC_001335.1"/>
</dbReference>
<dbReference type="SMR" id="Q05287"/>
<dbReference type="GeneID" id="2942971"/>
<dbReference type="KEGG" id="vg:2942971"/>
<dbReference type="OrthoDB" id="25448at10239"/>
<dbReference type="Proteomes" id="UP000002123">
    <property type="component" value="Genome"/>
</dbReference>
<sequence>MVPVTLYVDIDLEEYIKSYGFVGPLSAKSDLKETARQVVEFELARAGFKAKVHLRKPV</sequence>
<keyword id="KW-1185">Reference proteome</keyword>
<gene>
    <name type="primary">72</name>
</gene>
<proteinExistence type="predicted"/>
<organismHost>
    <name type="scientific">Mycobacterium</name>
    <dbReference type="NCBI Taxonomy" id="1763"/>
</organismHost>